<sequence>MDGQQLRSSESPASGGGGVTGGGAPHLFHALGPALLISIGYIDLGKWVAAVEAGSRFGLDLVLLALLFNFMAILCQYLAACIGTVTGRSLAEICHQEYSRPTCIFLGVQAGLSLLTSELTMIFGIALGFNLLFEYDDLITGICFATVVPNLLPYAISHLGKKMVGTLNACIAGFALLCYVLGLLVSQPQIPLTTNVIFPKLSGESAYSLMALLGANVMAHNFYIHSSVVQGQKRSAFAVGALFHDHLFSVLFIFTGIFLVNHVLMNSAAADSTNTLLLTFQDVVELMNQIFVNPMAPTIFLVVLLFSSHIISLTSAIGSQVISQHLFGINLPLSGHHLILKAFAIVPALYCAKVAGAEGIYQLLIICQIIQAMLLPSSVVPLFRVASSRLIMGAHRVSLHLEILTFLAFLLMLFSNIIFMAEMLFGDSGWLNTLKGNTGSPVVFPSTVLITVACVSVAFSLYMAVTPLKSGSHEAELQQEWSVPSQKELLNTTQDREETCAGNVTYEEDQRSDVVPSPRIQPVDCLKSALDYIDSSDTAIESDHDSQHSTAHTSTAPESCHSPSFIPEESKSVVAVDWPEPLEPISNAIVAEESTVESVDSKSTGERDIEVEPALLMDNDKEAPNILESDNKPLGGNNPSCASDDGPPSLTFSRGKGSDAGNGSGSLSRLSGLGRAARRQLAAILDEFWGHLFDYHGKLTQEASSKRFDILLGLDVRTPSSTVRADSQANEIPKSPMVRDNLQGSAFLGSSRDLMSTKNEMSNLDLTYGLQMGNNIGSSAWSQGMQLPSTQLQSSSNSLLDQGARLNSNFSTPSYADNNQFYQPATIHGYQLASYLKQMNANRNPYSSMPLDPQRLPKSSASAVPTYVDSVMHARNQNLLASLGATPSQIAATSRIGTMMAERSYYVPSTLDGNENAGSSAYSKKYHSSPDISALIAASRSALLNESKLGGGTIGSQSYLSRLASERSQYTNSVARPAAPLAFDELSPPKLPGDIFSMQQSPNPSARSLWAKQPFEQLFGVSSAELTKSEFNPAGRSGGMTKDDFSYKESEAKLLQSLRFCISKLLKLEGSGWLFKQNGGSDEDLIDQVAAVEKLLQQGTSDNQLLLGDTQQPPCDKADIQYMRVLPNCGDDCIWRASLVVSFGVWCIRRVLDLSLVESRPELWGKYTYVLNRLQGILDPAFSKPRSALSACACLHRDIRVLNSLRHSSLVATNSIPRQIRGSFTTASVVLEMIKDVETAVSGRKGRSGTAAGDVAFPKGKENLASVLKRYKRRLSSKGQQ</sequence>
<accession>Q0D8I9</accession>
<accession>Q69QL2</accession>
<accession>Q69QM8</accession>
<accession>Q6TJY0</accession>
<accession>Q6Z120</accession>
<name>EIN2_ORYSJ</name>
<evidence type="ECO:0000255" key="1"/>
<evidence type="ECO:0000256" key="2">
    <source>
        <dbReference type="SAM" id="MobiDB-lite"/>
    </source>
</evidence>
<evidence type="ECO:0000269" key="3">
    <source>
    </source>
</evidence>
<evidence type="ECO:0000269" key="4">
    <source>
    </source>
</evidence>
<evidence type="ECO:0000303" key="5">
    <source>
    </source>
</evidence>
<evidence type="ECO:0000303" key="6">
    <source>
    </source>
</evidence>
<evidence type="ECO:0000305" key="7"/>
<evidence type="ECO:0000312" key="8">
    <source>
        <dbReference type="EMBL" id="BAC84320.1"/>
    </source>
</evidence>
<evidence type="ECO:0000312" key="9">
    <source>
        <dbReference type="EMBL" id="BAD31350.1"/>
    </source>
</evidence>
<evidence type="ECO:0000312" key="10">
    <source>
        <dbReference type="EMBL" id="BAD31359.1"/>
    </source>
</evidence>
<evidence type="ECO:0000312" key="11">
    <source>
        <dbReference type="EMBL" id="BAD31367.1"/>
    </source>
</evidence>
<evidence type="ECO:0000312" key="12">
    <source>
        <dbReference type="EMBL" id="BAF20834.1"/>
    </source>
</evidence>
<organism>
    <name type="scientific">Oryza sativa subsp. japonica</name>
    <name type="common">Rice</name>
    <dbReference type="NCBI Taxonomy" id="39947"/>
    <lineage>
        <taxon>Eukaryota</taxon>
        <taxon>Viridiplantae</taxon>
        <taxon>Streptophyta</taxon>
        <taxon>Embryophyta</taxon>
        <taxon>Tracheophyta</taxon>
        <taxon>Spermatophyta</taxon>
        <taxon>Magnoliopsida</taxon>
        <taxon>Liliopsida</taxon>
        <taxon>Poales</taxon>
        <taxon>Poaceae</taxon>
        <taxon>BOP clade</taxon>
        <taxon>Oryzoideae</taxon>
        <taxon>Oryzeae</taxon>
        <taxon>Oryzinae</taxon>
        <taxon>Oryza</taxon>
        <taxon>Oryza sativa</taxon>
    </lineage>
</organism>
<comment type="function">
    <text evidence="3 4">Central factor in ethylene signaling pathways that control development, senescence and grain size. Acts as a positive component of the ethylene-signaling pathway.</text>
</comment>
<comment type="subcellular location">
    <subcellularLocation>
        <location evidence="1">Membrane</location>
        <topology evidence="1">Multi-pass membrane protein</topology>
    </subcellularLocation>
</comment>
<comment type="tissue specificity">
    <text evidence="3">Expressed in roots, leaf sheaths, leaf blades, flowers, developing seeds, germinating seeds and young seedlings (PubMed:15047876). Expressed in adventitious roots, vascular tissues of the seminal roots, lateral roots, the connecting region between vascular tissues and lateral roots, mature leaf, mature stem, tips of adventitious roots derived from the node, shoot apex, young panicle, anthers, pistil, stigma, ovary, seed coat and fruit coat pericarp.</text>
</comment>
<comment type="disruption phenotype">
    <text evidence="4">Mutant etiolated seedlings display insensitivite ethylene-response in roots and coleoptiles. Mature mutant plants have reduced shoot length, increased number of panicles and reduced grain yield.</text>
</comment>
<comment type="miscellaneous">
    <text evidence="3 6">Plants silencing EIN2 display a stunted phenotype with severe inhibition of shoot elongation and produce high levels of ethylene (PubMed:15047876). 'Mao huzi' means cat whiskers in Chinese (PubMed:23718947).</text>
</comment>
<comment type="similarity">
    <text evidence="7">Belongs to the NRAMP (TC 2.A.55) family.</text>
</comment>
<comment type="sequence caution" evidence="7">
    <conflict type="erroneous gene model prediction">
        <sequence resource="EMBL-CDS" id="BAC84320"/>
    </conflict>
</comment>
<comment type="sequence caution" evidence="7">
    <conflict type="erroneous gene model prediction">
        <sequence resource="EMBL-CDS" id="BAD31350"/>
    </conflict>
</comment>
<comment type="sequence caution" evidence="7">
    <conflict type="erroneous gene model prediction">
        <sequence resource="EMBL-CDS" id="BAD31359"/>
    </conflict>
</comment>
<comment type="sequence caution" evidence="7">
    <conflict type="erroneous gene model prediction">
        <sequence resource="EMBL-CDS" id="BAD31367"/>
    </conflict>
</comment>
<protein>
    <recommendedName>
        <fullName evidence="7">Protein ETHYLENE-INSENSITIVE 2</fullName>
        <shortName evidence="5">OsEIN2</shortName>
    </recommendedName>
    <alternativeName>
        <fullName evidence="6">Protein MAO HUZI 7</fullName>
    </alternativeName>
</protein>
<dbReference type="EMBL" id="AY396568">
    <property type="protein sequence ID" value="AAQ95276.1"/>
    <property type="molecule type" value="mRNA"/>
</dbReference>
<dbReference type="EMBL" id="AP005409">
    <property type="protein sequence ID" value="BAD31350.1"/>
    <property type="status" value="ALT_SEQ"/>
    <property type="molecule type" value="Genomic_DNA"/>
</dbReference>
<dbReference type="EMBL" id="AP005409">
    <property type="protein sequence ID" value="BAD31359.1"/>
    <property type="status" value="ALT_SEQ"/>
    <property type="molecule type" value="Genomic_DNA"/>
</dbReference>
<dbReference type="EMBL" id="AP005409">
    <property type="protein sequence ID" value="BAD31367.1"/>
    <property type="status" value="ALT_SEQ"/>
    <property type="molecule type" value="Genomic_DNA"/>
</dbReference>
<dbReference type="EMBL" id="AP005454">
    <property type="protein sequence ID" value="BAC84320.1"/>
    <property type="status" value="ALT_SEQ"/>
    <property type="molecule type" value="Genomic_DNA"/>
</dbReference>
<dbReference type="EMBL" id="AP008213">
    <property type="protein sequence ID" value="BAF20834.1"/>
    <property type="molecule type" value="Genomic_DNA"/>
</dbReference>
<dbReference type="EMBL" id="AP014963">
    <property type="protein sequence ID" value="BAT00121.1"/>
    <property type="molecule type" value="Genomic_DNA"/>
</dbReference>
<dbReference type="RefSeq" id="XP_015646967.1">
    <property type="nucleotide sequence ID" value="XM_015791481.1"/>
</dbReference>
<dbReference type="SMR" id="Q0D8I9"/>
<dbReference type="FunCoup" id="Q0D8I9">
    <property type="interactions" value="1884"/>
</dbReference>
<dbReference type="STRING" id="39947.Q0D8I9"/>
<dbReference type="PaxDb" id="39947-Q0D8I9"/>
<dbReference type="EnsemblPlants" id="Os07t0155600-01">
    <property type="protein sequence ID" value="Os07t0155600-01"/>
    <property type="gene ID" value="Os07g0155600"/>
</dbReference>
<dbReference type="Gramene" id="Os07t0155600-01">
    <property type="protein sequence ID" value="Os07t0155600-01"/>
    <property type="gene ID" value="Os07g0155600"/>
</dbReference>
<dbReference type="KEGG" id="dosa:Os07g0155600"/>
<dbReference type="eggNOG" id="KOG1291">
    <property type="taxonomic scope" value="Eukaryota"/>
</dbReference>
<dbReference type="HOGENOM" id="CLU_006509_0_0_1"/>
<dbReference type="InParanoid" id="Q0D8I9"/>
<dbReference type="OMA" id="ADIQYMR"/>
<dbReference type="OrthoDB" id="409173at2759"/>
<dbReference type="PlantReactome" id="R-OSA-5225756">
    <property type="pathway name" value="Ethylene mediated signaling"/>
</dbReference>
<dbReference type="Proteomes" id="UP000000763">
    <property type="component" value="Chromosome 7"/>
</dbReference>
<dbReference type="Proteomes" id="UP000059680">
    <property type="component" value="Chromosome 7"/>
</dbReference>
<dbReference type="GO" id="GO:0005886">
    <property type="term" value="C:plasma membrane"/>
    <property type="evidence" value="ECO:0000318"/>
    <property type="project" value="GO_Central"/>
</dbReference>
<dbReference type="GO" id="GO:0015086">
    <property type="term" value="F:cadmium ion transmembrane transporter activity"/>
    <property type="evidence" value="ECO:0000318"/>
    <property type="project" value="GO_Central"/>
</dbReference>
<dbReference type="GO" id="GO:0005384">
    <property type="term" value="F:manganese ion transmembrane transporter activity"/>
    <property type="evidence" value="ECO:0000318"/>
    <property type="project" value="GO_Central"/>
</dbReference>
<dbReference type="GO" id="GO:0009873">
    <property type="term" value="P:ethylene-activated signaling pathway"/>
    <property type="evidence" value="ECO:0007669"/>
    <property type="project" value="UniProtKB-KW"/>
</dbReference>
<dbReference type="GO" id="GO:0034755">
    <property type="term" value="P:iron ion transmembrane transport"/>
    <property type="evidence" value="ECO:0000318"/>
    <property type="project" value="GO_Central"/>
</dbReference>
<dbReference type="GO" id="GO:0006828">
    <property type="term" value="P:manganese ion transport"/>
    <property type="evidence" value="ECO:0000318"/>
    <property type="project" value="GO_Central"/>
</dbReference>
<dbReference type="GO" id="GO:0010104">
    <property type="term" value="P:regulation of ethylene-activated signaling pathway"/>
    <property type="evidence" value="ECO:0000315"/>
    <property type="project" value="UniProtKB"/>
</dbReference>
<dbReference type="InterPro" id="IPR017187">
    <property type="entry name" value="EIN2"/>
</dbReference>
<dbReference type="InterPro" id="IPR001046">
    <property type="entry name" value="NRAMP_fam"/>
</dbReference>
<dbReference type="NCBIfam" id="NF037982">
    <property type="entry name" value="Nramp_1"/>
    <property type="match status" value="1"/>
</dbReference>
<dbReference type="PANTHER" id="PTHR11706:SF75">
    <property type="entry name" value="ETHYLENE-INSENSITIVE PROTEIN 2"/>
    <property type="match status" value="1"/>
</dbReference>
<dbReference type="PANTHER" id="PTHR11706">
    <property type="entry name" value="SOLUTE CARRIER PROTEIN FAMILY 11 MEMBER"/>
    <property type="match status" value="1"/>
</dbReference>
<dbReference type="Pfam" id="PF01566">
    <property type="entry name" value="Nramp"/>
    <property type="match status" value="1"/>
</dbReference>
<dbReference type="PIRSF" id="PIRSF037378">
    <property type="entry name" value="EIN2"/>
    <property type="match status" value="1"/>
</dbReference>
<dbReference type="PRINTS" id="PR00447">
    <property type="entry name" value="NATRESASSCMP"/>
</dbReference>
<proteinExistence type="evidence at transcript level"/>
<reference key="1">
    <citation type="journal article" date="2004" name="Plant Cell Physiol.">
        <title>OsEIN2 is a positive component in ethylene signaling in rice.</title>
        <authorList>
            <person name="Jun S.H."/>
            <person name="Han M.J."/>
            <person name="Lee S."/>
            <person name="Seo Y.S."/>
            <person name="Kim W.T."/>
            <person name="An G."/>
        </authorList>
    </citation>
    <scope>NUCLEOTIDE SEQUENCE [MRNA]</scope>
    <scope>FUNCTION</scope>
    <scope>TISSUE SPECIFICITY</scope>
</reference>
<reference key="2">
    <citation type="journal article" date="2005" name="Nature">
        <title>The map-based sequence of the rice genome.</title>
        <authorList>
            <consortium name="International rice genome sequencing project (IRGSP)"/>
        </authorList>
    </citation>
    <scope>NUCLEOTIDE SEQUENCE [LARGE SCALE GENOMIC DNA]</scope>
    <source>
        <strain>cv. Nipponbare</strain>
    </source>
</reference>
<reference key="3">
    <citation type="journal article" date="2008" name="Nucleic Acids Res.">
        <title>The rice annotation project database (RAP-DB): 2008 update.</title>
        <authorList>
            <consortium name="The rice annotation project (RAP)"/>
        </authorList>
    </citation>
    <scope>GENOME REANNOTATION</scope>
    <source>
        <strain>cv. Nipponbare</strain>
    </source>
</reference>
<reference key="4">
    <citation type="journal article" date="2013" name="Rice">
        <title>Improvement of the Oryza sativa Nipponbare reference genome using next generation sequence and optical map data.</title>
        <authorList>
            <person name="Kawahara Y."/>
            <person name="de la Bastide M."/>
            <person name="Hamilton J.P."/>
            <person name="Kanamori H."/>
            <person name="McCombie W.R."/>
            <person name="Ouyang S."/>
            <person name="Schwartz D.C."/>
            <person name="Tanaka T."/>
            <person name="Wu J."/>
            <person name="Zhou S."/>
            <person name="Childs K.L."/>
            <person name="Davidson R.M."/>
            <person name="Lin H."/>
            <person name="Quesada-Ocampo L."/>
            <person name="Vaillancourt B."/>
            <person name="Sakai H."/>
            <person name="Lee S.S."/>
            <person name="Kim J."/>
            <person name="Numa H."/>
            <person name="Itoh T."/>
            <person name="Buell C.R."/>
            <person name="Matsumoto T."/>
        </authorList>
    </citation>
    <scope>GENOME REANNOTATION</scope>
    <source>
        <strain>cv. Nipponbare</strain>
    </source>
</reference>
<reference key="5">
    <citation type="journal article" date="2013" name="Mol. Plant">
        <title>Identification of rice ethylene-response mutants and characterization of MHZ7/OsEIN2 in distinct ethylene response and yield trait regulation.</title>
        <authorList>
            <person name="Ma B."/>
            <person name="He S.J."/>
            <person name="Duan K.X."/>
            <person name="Yin C.C."/>
            <person name="Chen H."/>
            <person name="Yang C."/>
            <person name="Xiong Q."/>
            <person name="Song Q.X."/>
            <person name="Lu X."/>
            <person name="Chen H.W."/>
            <person name="Zhang W.K."/>
            <person name="Lu T.G."/>
            <person name="Chen S.Y."/>
            <person name="Zhang J.S."/>
        </authorList>
    </citation>
    <scope>FUNCTION</scope>
    <scope>DISRUPTION PHENOTYPE</scope>
</reference>
<keyword id="KW-0936">Ethylene signaling pathway</keyword>
<keyword id="KW-0472">Membrane</keyword>
<keyword id="KW-1185">Reference proteome</keyword>
<keyword id="KW-0812">Transmembrane</keyword>
<keyword id="KW-1133">Transmembrane helix</keyword>
<feature type="chain" id="PRO_0000435899" description="Protein ETHYLENE-INSENSITIVE 2">
    <location>
        <begin position="1"/>
        <end position="1281"/>
    </location>
</feature>
<feature type="topological domain" description="Cytoplasmic" evidence="7">
    <location>
        <begin position="1"/>
        <end position="21"/>
    </location>
</feature>
<feature type="transmembrane region" description="Helical" evidence="1">
    <location>
        <begin position="22"/>
        <end position="42"/>
    </location>
</feature>
<feature type="topological domain" description="Extracellular" evidence="7">
    <location>
        <begin position="43"/>
        <end position="61"/>
    </location>
</feature>
<feature type="transmembrane region" description="Helical" evidence="1">
    <location>
        <begin position="62"/>
        <end position="82"/>
    </location>
</feature>
<feature type="topological domain" description="Cytoplasmic" evidence="7">
    <location>
        <begin position="83"/>
        <end position="112"/>
    </location>
</feature>
<feature type="transmembrane region" description="Helical" evidence="1">
    <location>
        <begin position="113"/>
        <end position="133"/>
    </location>
</feature>
<feature type="topological domain" description="Extracellular" evidence="7">
    <location>
        <begin position="134"/>
        <end position="137"/>
    </location>
</feature>
<feature type="transmembrane region" description="Helical" evidence="1">
    <location>
        <begin position="138"/>
        <end position="158"/>
    </location>
</feature>
<feature type="topological domain" description="Cytoplasmic" evidence="7">
    <location>
        <begin position="159"/>
        <end position="163"/>
    </location>
</feature>
<feature type="transmembrane region" description="Helical" evidence="1">
    <location>
        <begin position="164"/>
        <end position="184"/>
    </location>
</feature>
<feature type="topological domain" description="Extracellular" evidence="7">
    <location>
        <begin position="185"/>
        <end position="208"/>
    </location>
</feature>
<feature type="transmembrane region" description="Helical" evidence="1">
    <location>
        <begin position="209"/>
        <end position="229"/>
    </location>
</feature>
<feature type="topological domain" description="Cytoplasmic" evidence="7">
    <location>
        <begin position="230"/>
        <end position="238"/>
    </location>
</feature>
<feature type="transmembrane region" description="Helical" evidence="1">
    <location>
        <begin position="239"/>
        <end position="259"/>
    </location>
</feature>
<feature type="topological domain" description="Extracellular" evidence="7">
    <location>
        <begin position="260"/>
        <end position="297"/>
    </location>
</feature>
<feature type="transmembrane region" description="Helical" evidence="1">
    <location>
        <begin position="298"/>
        <end position="318"/>
    </location>
</feature>
<feature type="topological domain" description="Cytoplasmic" evidence="7">
    <location>
        <begin position="319"/>
        <end position="325"/>
    </location>
</feature>
<feature type="transmembrane region" description="Helical" evidence="1">
    <location>
        <begin position="326"/>
        <end position="346"/>
    </location>
</feature>
<feature type="topological domain" description="Extracellular" evidence="7">
    <location>
        <begin position="347"/>
        <end position="362"/>
    </location>
</feature>
<feature type="transmembrane region" description="Helical" evidence="1">
    <location>
        <begin position="363"/>
        <end position="383"/>
    </location>
</feature>
<feature type="topological domain" description="Cytoplasmic" evidence="7">
    <location>
        <begin position="384"/>
        <end position="400"/>
    </location>
</feature>
<feature type="transmembrane region" description="Helical" evidence="1">
    <location>
        <begin position="401"/>
        <end position="421"/>
    </location>
</feature>
<feature type="topological domain" description="Extracellular" evidence="7">
    <location>
        <begin position="422"/>
        <end position="447"/>
    </location>
</feature>
<feature type="transmembrane region" description="Helical" evidence="1">
    <location>
        <begin position="448"/>
        <end position="468"/>
    </location>
</feature>
<feature type="topological domain" description="Cytoplasmic" evidence="7">
    <location>
        <begin position="469"/>
        <end position="1281"/>
    </location>
</feature>
<feature type="region of interest" description="Disordered" evidence="2">
    <location>
        <begin position="540"/>
        <end position="565"/>
    </location>
</feature>
<feature type="region of interest" description="Disordered" evidence="2">
    <location>
        <begin position="593"/>
        <end position="665"/>
    </location>
</feature>
<feature type="compositionally biased region" description="Polar residues" evidence="2">
    <location>
        <begin position="548"/>
        <end position="557"/>
    </location>
</feature>
<feature type="compositionally biased region" description="Basic and acidic residues" evidence="2">
    <location>
        <begin position="599"/>
        <end position="610"/>
    </location>
</feature>
<feature type="sequence conflict" description="In Ref. 1; AAQ95276." evidence="7" ref="1">
    <original>P</original>
    <variation>S</variation>
    <location>
        <position position="633"/>
    </location>
</feature>
<gene>
    <name evidence="5" type="primary">EIN2</name>
    <name evidence="6" type="synonym">MHZ7</name>
    <name evidence="12" type="ordered locus">Os07g0155600</name>
    <name evidence="7" type="ordered locus">LOC_Os07g06130</name>
    <name evidence="9" type="ORF">OSJNBa0024L18.19</name>
    <name evidence="10" type="ORF">OSJNBa0024L18.30</name>
    <name evidence="11" type="ORF">OSJNBa0024L18.49</name>
    <name evidence="8" type="ORF">P0455F03.4</name>
</gene>